<comment type="function">
    <text evidence="1">Binds directly to 23S ribosomal RNA and is necessary for the in vitro assembly process of the 50S ribosomal subunit. It is not involved in the protein synthesizing functions of that subunit.</text>
</comment>
<comment type="similarity">
    <text evidence="1">Belongs to the bacterial ribosomal protein bL20 family.</text>
</comment>
<organism>
    <name type="scientific">Xylella fastidiosa (strain M12)</name>
    <dbReference type="NCBI Taxonomy" id="405440"/>
    <lineage>
        <taxon>Bacteria</taxon>
        <taxon>Pseudomonadati</taxon>
        <taxon>Pseudomonadota</taxon>
        <taxon>Gammaproteobacteria</taxon>
        <taxon>Lysobacterales</taxon>
        <taxon>Lysobacteraceae</taxon>
        <taxon>Xylella</taxon>
    </lineage>
</organism>
<feature type="chain" id="PRO_1000122396" description="Large ribosomal subunit protein bL20">
    <location>
        <begin position="1"/>
        <end position="119"/>
    </location>
</feature>
<reference key="1">
    <citation type="journal article" date="2010" name="J. Bacteriol.">
        <title>Whole genome sequences of two Xylella fastidiosa strains (M12 and M23) causing almond leaf scorch disease in California.</title>
        <authorList>
            <person name="Chen J."/>
            <person name="Xie G."/>
            <person name="Han S."/>
            <person name="Chertkov O."/>
            <person name="Sims D."/>
            <person name="Civerolo E.L."/>
        </authorList>
    </citation>
    <scope>NUCLEOTIDE SEQUENCE [LARGE SCALE GENOMIC DNA]</scope>
    <source>
        <strain>M12</strain>
    </source>
</reference>
<accession>B0U5E0</accession>
<sequence>MARVKRGVQARRRHKKILSLAKGYYNARRKVFRVAKQAVIKAQQYAYIGRKQKKRNFRSLWIVRINAAARINGLSYSRFMNGILKCGITLDRKMLADIAVHDPAGFTALAEKAKSMLAA</sequence>
<name>RL20_XYLFM</name>
<gene>
    <name evidence="1" type="primary">rplT</name>
    <name type="ordered locus">Xfasm12_2096</name>
</gene>
<protein>
    <recommendedName>
        <fullName evidence="1">Large ribosomal subunit protein bL20</fullName>
    </recommendedName>
    <alternativeName>
        <fullName evidence="2">50S ribosomal protein L20</fullName>
    </alternativeName>
</protein>
<keyword id="KW-0687">Ribonucleoprotein</keyword>
<keyword id="KW-0689">Ribosomal protein</keyword>
<keyword id="KW-0694">RNA-binding</keyword>
<keyword id="KW-0699">rRNA-binding</keyword>
<proteinExistence type="inferred from homology"/>
<dbReference type="EMBL" id="CP000941">
    <property type="protein sequence ID" value="ACA12958.1"/>
    <property type="molecule type" value="Genomic_DNA"/>
</dbReference>
<dbReference type="RefSeq" id="WP_004084573.1">
    <property type="nucleotide sequence ID" value="NC_010513.1"/>
</dbReference>
<dbReference type="SMR" id="B0U5E0"/>
<dbReference type="KEGG" id="xfm:Xfasm12_2096"/>
<dbReference type="HOGENOM" id="CLU_123265_0_1_6"/>
<dbReference type="GO" id="GO:1990904">
    <property type="term" value="C:ribonucleoprotein complex"/>
    <property type="evidence" value="ECO:0007669"/>
    <property type="project" value="UniProtKB-KW"/>
</dbReference>
<dbReference type="GO" id="GO:0005840">
    <property type="term" value="C:ribosome"/>
    <property type="evidence" value="ECO:0007669"/>
    <property type="project" value="UniProtKB-KW"/>
</dbReference>
<dbReference type="GO" id="GO:0019843">
    <property type="term" value="F:rRNA binding"/>
    <property type="evidence" value="ECO:0007669"/>
    <property type="project" value="UniProtKB-UniRule"/>
</dbReference>
<dbReference type="GO" id="GO:0003735">
    <property type="term" value="F:structural constituent of ribosome"/>
    <property type="evidence" value="ECO:0007669"/>
    <property type="project" value="InterPro"/>
</dbReference>
<dbReference type="GO" id="GO:0000027">
    <property type="term" value="P:ribosomal large subunit assembly"/>
    <property type="evidence" value="ECO:0007669"/>
    <property type="project" value="UniProtKB-UniRule"/>
</dbReference>
<dbReference type="GO" id="GO:0006412">
    <property type="term" value="P:translation"/>
    <property type="evidence" value="ECO:0007669"/>
    <property type="project" value="InterPro"/>
</dbReference>
<dbReference type="CDD" id="cd07026">
    <property type="entry name" value="Ribosomal_L20"/>
    <property type="match status" value="1"/>
</dbReference>
<dbReference type="FunFam" id="1.10.1900.20:FF:000001">
    <property type="entry name" value="50S ribosomal protein L20"/>
    <property type="match status" value="1"/>
</dbReference>
<dbReference type="Gene3D" id="6.10.160.10">
    <property type="match status" value="1"/>
</dbReference>
<dbReference type="Gene3D" id="1.10.1900.20">
    <property type="entry name" value="Ribosomal protein L20"/>
    <property type="match status" value="1"/>
</dbReference>
<dbReference type="HAMAP" id="MF_00382">
    <property type="entry name" value="Ribosomal_bL20"/>
    <property type="match status" value="1"/>
</dbReference>
<dbReference type="InterPro" id="IPR005813">
    <property type="entry name" value="Ribosomal_bL20"/>
</dbReference>
<dbReference type="InterPro" id="IPR049946">
    <property type="entry name" value="RIBOSOMAL_L20_CS"/>
</dbReference>
<dbReference type="InterPro" id="IPR035566">
    <property type="entry name" value="Ribosomal_protein_bL20_C"/>
</dbReference>
<dbReference type="NCBIfam" id="TIGR01032">
    <property type="entry name" value="rplT_bact"/>
    <property type="match status" value="1"/>
</dbReference>
<dbReference type="PANTHER" id="PTHR10986">
    <property type="entry name" value="39S RIBOSOMAL PROTEIN L20"/>
    <property type="match status" value="1"/>
</dbReference>
<dbReference type="Pfam" id="PF00453">
    <property type="entry name" value="Ribosomal_L20"/>
    <property type="match status" value="1"/>
</dbReference>
<dbReference type="PRINTS" id="PR00062">
    <property type="entry name" value="RIBOSOMALL20"/>
</dbReference>
<dbReference type="SUPFAM" id="SSF74731">
    <property type="entry name" value="Ribosomal protein L20"/>
    <property type="match status" value="1"/>
</dbReference>
<dbReference type="PROSITE" id="PS00937">
    <property type="entry name" value="RIBOSOMAL_L20"/>
    <property type="match status" value="1"/>
</dbReference>
<evidence type="ECO:0000255" key="1">
    <source>
        <dbReference type="HAMAP-Rule" id="MF_00382"/>
    </source>
</evidence>
<evidence type="ECO:0000305" key="2"/>